<accession>P54932</accession>
<accession>P72341</accession>
<accession>Q3J016</accession>
<evidence type="ECO:0000250" key="1"/>
<evidence type="ECO:0000255" key="2"/>
<evidence type="ECO:0000255" key="3">
    <source>
        <dbReference type="PROSITE-ProRule" id="PRU00711"/>
    </source>
</evidence>
<evidence type="ECO:0000269" key="4">
    <source>
    </source>
</evidence>
<protein>
    <recommendedName>
        <fullName>Protein RdxB</fullName>
    </recommendedName>
</protein>
<comment type="function">
    <text evidence="4">Involved in a membrane generated redox signal; required to maintain repression of photosynthesis gene expression in the presence of oxygen.</text>
</comment>
<comment type="cofactor">
    <cofactor>
        <name>[4Fe-4S] cluster</name>
        <dbReference type="ChEBI" id="CHEBI:49883"/>
    </cofactor>
    <text>Binds 2 [4Fe-4S] clusters per subunit.</text>
</comment>
<comment type="subcellular location">
    <subcellularLocation>
        <location>Cell membrane</location>
        <topology>Multi-pass membrane protein</topology>
    </subcellularLocation>
</comment>
<reference key="1">
    <citation type="journal article" date="1997" name="J. Bacteriol.">
        <title>Evidence for the role of redox carriers in photosynthesis gene expression and carotenoid biosynthesis in Rhodobacter sphaeroides 2.4.1.</title>
        <authorList>
            <person name="O'Gara J.P."/>
            <person name="Kaplan S."/>
        </authorList>
    </citation>
    <scope>NUCLEOTIDE SEQUENCE [GENOMIC DNA]</scope>
    <scope>FUNCTION</scope>
</reference>
<reference key="2">
    <citation type="submission" date="2005-09" db="EMBL/GenBank/DDBJ databases">
        <title>Complete sequence of chromosome 1 of Rhodobacter sphaeroides 2.4.1.</title>
        <authorList>
            <person name="Copeland A."/>
            <person name="Lucas S."/>
            <person name="Lapidus A."/>
            <person name="Barry K."/>
            <person name="Detter J.C."/>
            <person name="Glavina T."/>
            <person name="Hammon N."/>
            <person name="Israni S."/>
            <person name="Pitluck S."/>
            <person name="Richardson P."/>
            <person name="Mackenzie C."/>
            <person name="Choudhary M."/>
            <person name="Larimer F."/>
            <person name="Hauser L.J."/>
            <person name="Land M."/>
            <person name="Donohue T.J."/>
            <person name="Kaplan S."/>
        </authorList>
    </citation>
    <scope>NUCLEOTIDE SEQUENCE [LARGE SCALE GENOMIC DNA]</scope>
    <source>
        <strain>ATCC 17023 / DSM 158 / JCM 6121 / CCUG 31486 / LMG 2827 / NBRC 12203 / NCIMB 8253 / ATH 2.4.1.</strain>
    </source>
</reference>
<reference key="3">
    <citation type="journal article" date="1995" name="J. Bacteriol.">
        <title>Aerobic and anaerobic regulation in Rhodobacter sphaeroides 2.4.1: the role of the fnrL gene.</title>
        <authorList>
            <person name="Zeilstra-Ryalls J.H."/>
            <person name="Kaplan S."/>
        </authorList>
    </citation>
    <scope>NUCLEOTIDE SEQUENCE [GENOMIC DNA] OF 1-184</scope>
</reference>
<organism>
    <name type="scientific">Cereibacter sphaeroides (strain ATCC 17023 / DSM 158 / JCM 6121 / CCUG 31486 / LMG 2827 / NBRC 12203 / NCIMB 8253 / ATH 2.4.1.)</name>
    <name type="common">Rhodobacter sphaeroides</name>
    <dbReference type="NCBI Taxonomy" id="272943"/>
    <lineage>
        <taxon>Bacteria</taxon>
        <taxon>Pseudomonadati</taxon>
        <taxon>Pseudomonadota</taxon>
        <taxon>Alphaproteobacteria</taxon>
        <taxon>Rhodobacterales</taxon>
        <taxon>Paracoccaceae</taxon>
        <taxon>Cereibacter</taxon>
    </lineage>
</organism>
<sequence length="477" mass="53947">MTSPDTQTSSLYAKREPVFPKRVSGKFRSLKWWIMGVTLGIYYIAPWLRWDRGPNLPDQAILVDLANRRFFFFMIEIWPHEFYFVAGLLIMAGLGLFLFTSAAGRVWCGYACPQTVWTDLFILVERWVEGDRNARIRLLRQRWDLEKTRKYLTKWTLWLLIGLATGGAWVFYFTDAPTLLVDLLTGNAHPVAYITMATLTATTFAFGGFAREQICIYACPWPRIQAAMMDEETITVAYREWRGEPRGKLKKGEPLSPDQGDCIDCMACVNVCPMGIDIRDGQQLACITCALCIDACDEVMDKIGKPRGLIGYLALTDERAEREGRSPRSAWRHVFRLRTLIYTALWSGVGLALIVALFLRSPIDINVTPLRNPLYVTLSDGSIRNTYDVRLRNKQGEARDYQISVTSEADLALSLEGHPATVVTVPANETMTQRVYIIAGKGTPAAEAERTDLRLWVEDLAAGQRVHHDTIFNGRGN</sequence>
<proteinExistence type="predicted"/>
<name>RDXB_CERS4</name>
<feature type="chain" id="PRO_0000159238" description="Protein RdxB">
    <location>
        <begin position="1"/>
        <end position="477"/>
    </location>
</feature>
<feature type="topological domain" description="Cytoplasmic" evidence="2">
    <location>
        <begin position="1"/>
        <end position="29"/>
    </location>
</feature>
<feature type="transmembrane region" description="Helical" evidence="2">
    <location>
        <begin position="30"/>
        <end position="50"/>
    </location>
</feature>
<feature type="topological domain" description="Periplasmic" evidence="2">
    <location>
        <begin position="51"/>
        <end position="81"/>
    </location>
</feature>
<feature type="transmembrane region" description="Helical" evidence="2">
    <location>
        <begin position="82"/>
        <end position="102"/>
    </location>
</feature>
<feature type="topological domain" description="Cytoplasmic" evidence="2">
    <location>
        <begin position="103"/>
        <end position="154"/>
    </location>
</feature>
<feature type="transmembrane region" description="Helical" evidence="2">
    <location>
        <begin position="155"/>
        <end position="175"/>
    </location>
</feature>
<feature type="topological domain" description="Periplasmic" evidence="2">
    <location>
        <begin position="176"/>
        <end position="189"/>
    </location>
</feature>
<feature type="transmembrane region" description="Helical" evidence="2">
    <location>
        <begin position="190"/>
        <end position="210"/>
    </location>
</feature>
<feature type="topological domain" description="Cytoplasmic" evidence="2">
    <location>
        <begin position="211"/>
        <end position="338"/>
    </location>
</feature>
<feature type="transmembrane region" description="Helical" evidence="2">
    <location>
        <begin position="339"/>
        <end position="359"/>
    </location>
</feature>
<feature type="topological domain" description="Periplasmic" evidence="2">
    <location>
        <begin position="360"/>
        <end position="477"/>
    </location>
</feature>
<feature type="domain" description="4Fe-4S ferredoxin-type" evidence="3">
    <location>
        <begin position="253"/>
        <end position="281"/>
    </location>
</feature>
<feature type="binding site" evidence="1">
    <location>
        <position position="262"/>
    </location>
    <ligand>
        <name>[4Fe-4S] cluster</name>
        <dbReference type="ChEBI" id="CHEBI:49883"/>
        <label>1</label>
    </ligand>
</feature>
<feature type="binding site" evidence="1">
    <location>
        <position position="265"/>
    </location>
    <ligand>
        <name>[4Fe-4S] cluster</name>
        <dbReference type="ChEBI" id="CHEBI:49883"/>
        <label>1</label>
    </ligand>
</feature>
<feature type="binding site" evidence="1">
    <location>
        <position position="268"/>
    </location>
    <ligand>
        <name>[4Fe-4S] cluster</name>
        <dbReference type="ChEBI" id="CHEBI:49883"/>
        <label>1</label>
    </ligand>
</feature>
<feature type="binding site" evidence="1">
    <location>
        <position position="272"/>
    </location>
    <ligand>
        <name>[4Fe-4S] cluster</name>
        <dbReference type="ChEBI" id="CHEBI:49883"/>
        <label>2</label>
    </ligand>
</feature>
<feature type="binding site" evidence="1">
    <location>
        <position position="286"/>
    </location>
    <ligand>
        <name>[4Fe-4S] cluster</name>
        <dbReference type="ChEBI" id="CHEBI:49883"/>
        <label>2</label>
    </ligand>
</feature>
<feature type="binding site" evidence="1">
    <location>
        <position position="289"/>
    </location>
    <ligand>
        <name>[4Fe-4S] cluster</name>
        <dbReference type="ChEBI" id="CHEBI:49883"/>
        <label>2</label>
    </ligand>
</feature>
<feature type="binding site" evidence="1">
    <location>
        <position position="292"/>
    </location>
    <ligand>
        <name>[4Fe-4S] cluster</name>
        <dbReference type="ChEBI" id="CHEBI:49883"/>
        <label>2</label>
    </ligand>
</feature>
<feature type="binding site" evidence="1">
    <location>
        <position position="296"/>
    </location>
    <ligand>
        <name>[4Fe-4S] cluster</name>
        <dbReference type="ChEBI" id="CHEBI:49883"/>
        <label>1</label>
    </ligand>
</feature>
<dbReference type="EMBL" id="AF202779">
    <property type="protein sequence ID" value="AAF44623.1"/>
    <property type="molecule type" value="Genomic_DNA"/>
</dbReference>
<dbReference type="EMBL" id="CP000143">
    <property type="protein sequence ID" value="ABA79868.1"/>
    <property type="molecule type" value="Genomic_DNA"/>
</dbReference>
<dbReference type="RefSeq" id="WP_011338421.1">
    <property type="nucleotide sequence ID" value="NC_007493.2"/>
</dbReference>
<dbReference type="RefSeq" id="YP_353769.1">
    <property type="nucleotide sequence ID" value="NC_007493.2"/>
</dbReference>
<dbReference type="SMR" id="P54932"/>
<dbReference type="STRING" id="272943.RSP_0692"/>
<dbReference type="EnsemblBacteria" id="ABA79868">
    <property type="protein sequence ID" value="ABA79868"/>
    <property type="gene ID" value="RSP_0692"/>
</dbReference>
<dbReference type="GeneID" id="3718342"/>
<dbReference type="KEGG" id="rsp:RSP_0692"/>
<dbReference type="PATRIC" id="fig|272943.9.peg.2644"/>
<dbReference type="eggNOG" id="COG0348">
    <property type="taxonomic scope" value="Bacteria"/>
</dbReference>
<dbReference type="OrthoDB" id="9811700at2"/>
<dbReference type="PhylomeDB" id="P54932"/>
<dbReference type="Proteomes" id="UP000002703">
    <property type="component" value="Chromosome 1"/>
</dbReference>
<dbReference type="GO" id="GO:0005886">
    <property type="term" value="C:plasma membrane"/>
    <property type="evidence" value="ECO:0007669"/>
    <property type="project" value="UniProtKB-SubCell"/>
</dbReference>
<dbReference type="GO" id="GO:0051539">
    <property type="term" value="F:4 iron, 4 sulfur cluster binding"/>
    <property type="evidence" value="ECO:0007669"/>
    <property type="project" value="UniProtKB-KW"/>
</dbReference>
<dbReference type="GO" id="GO:0046872">
    <property type="term" value="F:metal ion binding"/>
    <property type="evidence" value="ECO:0007669"/>
    <property type="project" value="UniProtKB-KW"/>
</dbReference>
<dbReference type="Gene3D" id="3.30.70.20">
    <property type="match status" value="1"/>
</dbReference>
<dbReference type="Gene3D" id="2.60.40.10">
    <property type="entry name" value="Immunoglobulins"/>
    <property type="match status" value="1"/>
</dbReference>
<dbReference type="InterPro" id="IPR017896">
    <property type="entry name" value="4Fe4S_Fe-S-bd"/>
</dbReference>
<dbReference type="InterPro" id="IPR017900">
    <property type="entry name" value="4Fe4S_Fe_S_CS"/>
</dbReference>
<dbReference type="InterPro" id="IPR014116">
    <property type="entry name" value="Cyt_c_oxidase_cbb3_FixG"/>
</dbReference>
<dbReference type="InterPro" id="IPR051684">
    <property type="entry name" value="Electron_Trans/Redox"/>
</dbReference>
<dbReference type="InterPro" id="IPR032879">
    <property type="entry name" value="FixG_C"/>
</dbReference>
<dbReference type="InterPro" id="IPR013783">
    <property type="entry name" value="Ig-like_fold"/>
</dbReference>
<dbReference type="NCBIfam" id="TIGR02745">
    <property type="entry name" value="ccoG_rdxA_fixG"/>
    <property type="match status" value="1"/>
</dbReference>
<dbReference type="PANTHER" id="PTHR30176">
    <property type="entry name" value="FERREDOXIN-TYPE PROTEIN NAPH"/>
    <property type="match status" value="1"/>
</dbReference>
<dbReference type="PANTHER" id="PTHR30176:SF3">
    <property type="entry name" value="FERREDOXIN-TYPE PROTEIN NAPH"/>
    <property type="match status" value="1"/>
</dbReference>
<dbReference type="Pfam" id="PF13746">
    <property type="entry name" value="Fer4_18"/>
    <property type="match status" value="1"/>
</dbReference>
<dbReference type="Pfam" id="PF12801">
    <property type="entry name" value="Fer4_5"/>
    <property type="match status" value="1"/>
</dbReference>
<dbReference type="Pfam" id="PF11614">
    <property type="entry name" value="FixG_C"/>
    <property type="match status" value="1"/>
</dbReference>
<dbReference type="SUPFAM" id="SSF54862">
    <property type="entry name" value="4Fe-4S ferredoxins"/>
    <property type="match status" value="1"/>
</dbReference>
<dbReference type="PROSITE" id="PS00198">
    <property type="entry name" value="4FE4S_FER_1"/>
    <property type="match status" value="1"/>
</dbReference>
<dbReference type="PROSITE" id="PS51379">
    <property type="entry name" value="4FE4S_FER_2"/>
    <property type="match status" value="1"/>
</dbReference>
<gene>
    <name type="primary">rdxB</name>
    <name type="ordered locus">RHOS4_23000</name>
    <name type="ORF">RSP_0692</name>
</gene>
<keyword id="KW-0004">4Fe-4S</keyword>
<keyword id="KW-1003">Cell membrane</keyword>
<keyword id="KW-0249">Electron transport</keyword>
<keyword id="KW-0408">Iron</keyword>
<keyword id="KW-0411">Iron-sulfur</keyword>
<keyword id="KW-0472">Membrane</keyword>
<keyword id="KW-0479">Metal-binding</keyword>
<keyword id="KW-1185">Reference proteome</keyword>
<keyword id="KW-0812">Transmembrane</keyword>
<keyword id="KW-1133">Transmembrane helix</keyword>
<keyword id="KW-0813">Transport</keyword>